<accession>A7Y3A9</accession>
<evidence type="ECO:0000255" key="1">
    <source>
        <dbReference type="HAMAP-Rule" id="MF_01396"/>
    </source>
</evidence>
<protein>
    <recommendedName>
        <fullName evidence="1">ATP synthase subunit c, chloroplastic</fullName>
    </recommendedName>
    <alternativeName>
        <fullName evidence="1">ATP synthase F(0) sector subunit c</fullName>
    </alternativeName>
    <alternativeName>
        <fullName evidence="1">ATPase subunit III</fullName>
    </alternativeName>
    <alternativeName>
        <fullName evidence="1">F-type ATPase subunit c</fullName>
        <shortName evidence="1">F-ATPase subunit c</shortName>
    </alternativeName>
    <alternativeName>
        <fullName evidence="1">Lipid-binding protein</fullName>
    </alternativeName>
</protein>
<geneLocation type="chloroplast"/>
<sequence>MDPLISAASVIAAGLAVGLASIGPGVGQGTAAGQAVEGIARQPEAEGKIRGTLLLSLAFMEALTIYGLVVALALLFANPFV</sequence>
<proteinExistence type="inferred from homology"/>
<organism>
    <name type="scientific">Ipomoea purpurea</name>
    <name type="common">Common morning glory</name>
    <name type="synonym">Pharbitis purpurea</name>
    <dbReference type="NCBI Taxonomy" id="4121"/>
    <lineage>
        <taxon>Eukaryota</taxon>
        <taxon>Viridiplantae</taxon>
        <taxon>Streptophyta</taxon>
        <taxon>Embryophyta</taxon>
        <taxon>Tracheophyta</taxon>
        <taxon>Spermatophyta</taxon>
        <taxon>Magnoliopsida</taxon>
        <taxon>eudicotyledons</taxon>
        <taxon>Gunneridae</taxon>
        <taxon>Pentapetalae</taxon>
        <taxon>asterids</taxon>
        <taxon>lamiids</taxon>
        <taxon>Solanales</taxon>
        <taxon>Convolvulaceae</taxon>
        <taxon>Ipomoeeae</taxon>
        <taxon>Ipomoea</taxon>
    </lineage>
</organism>
<gene>
    <name evidence="1" type="primary">atpH</name>
</gene>
<reference key="1">
    <citation type="journal article" date="2007" name="BMC Plant Biol.">
        <title>Complete plastid genome sequences suggest strong selection for retention of photosynthetic genes in the parasitic plant genus Cuscuta.</title>
        <authorList>
            <person name="McNeal J.R."/>
            <person name="Kuehl J.V."/>
            <person name="Boore J.L."/>
            <person name="dePamphilis C.W."/>
        </authorList>
    </citation>
    <scope>NUCLEOTIDE SEQUENCE [LARGE SCALE GENOMIC DNA]</scope>
</reference>
<comment type="function">
    <text evidence="1">F(1)F(0) ATP synthase produces ATP from ADP in the presence of a proton or sodium gradient. F-type ATPases consist of two structural domains, F(1) containing the extramembraneous catalytic core and F(0) containing the membrane proton channel, linked together by a central stalk and a peripheral stalk. During catalysis, ATP synthesis in the catalytic domain of F(1) is coupled via a rotary mechanism of the central stalk subunits to proton translocation.</text>
</comment>
<comment type="function">
    <text evidence="1">Key component of the F(0) channel; it plays a direct role in translocation across the membrane. A homomeric c-ring of between 10-14 subunits forms the central stalk rotor element with the F(1) delta and epsilon subunits.</text>
</comment>
<comment type="subunit">
    <text evidence="1">F-type ATPases have 2 components, F(1) - the catalytic core - and F(0) - the membrane proton channel. F(1) has five subunits: alpha(3), beta(3), gamma(1), delta(1), epsilon(1). F(0) has four main subunits: a(1), b(1), b'(1) and c(10-14). The alpha and beta chains form an alternating ring which encloses part of the gamma chain. F(1) is attached to F(0) by a central stalk formed by the gamma and epsilon chains, while a peripheral stalk is formed by the delta, b and b' chains.</text>
</comment>
<comment type="subcellular location">
    <subcellularLocation>
        <location evidence="1">Plastid</location>
        <location evidence="1">Chloroplast thylakoid membrane</location>
        <topology evidence="1">Multi-pass membrane protein</topology>
    </subcellularLocation>
</comment>
<comment type="miscellaneous">
    <text>In plastids the F-type ATPase is also known as CF(1)CF(0).</text>
</comment>
<comment type="similarity">
    <text evidence="1">Belongs to the ATPase C chain family.</text>
</comment>
<keyword id="KW-0066">ATP synthesis</keyword>
<keyword id="KW-0138">CF(0)</keyword>
<keyword id="KW-0150">Chloroplast</keyword>
<keyword id="KW-0375">Hydrogen ion transport</keyword>
<keyword id="KW-0406">Ion transport</keyword>
<keyword id="KW-0446">Lipid-binding</keyword>
<keyword id="KW-0472">Membrane</keyword>
<keyword id="KW-0934">Plastid</keyword>
<keyword id="KW-0793">Thylakoid</keyword>
<keyword id="KW-0812">Transmembrane</keyword>
<keyword id="KW-1133">Transmembrane helix</keyword>
<keyword id="KW-0813">Transport</keyword>
<feature type="chain" id="PRO_0000362925" description="ATP synthase subunit c, chloroplastic">
    <location>
        <begin position="1"/>
        <end position="81"/>
    </location>
</feature>
<feature type="transmembrane region" description="Helical" evidence="1">
    <location>
        <begin position="3"/>
        <end position="23"/>
    </location>
</feature>
<feature type="transmembrane region" description="Helical" evidence="1">
    <location>
        <begin position="57"/>
        <end position="77"/>
    </location>
</feature>
<feature type="site" description="Reversibly protonated during proton transport" evidence="1">
    <location>
        <position position="61"/>
    </location>
</feature>
<name>ATPH_IPOPU</name>
<dbReference type="EMBL" id="EU118126">
    <property type="protein sequence ID" value="ABV02335.1"/>
    <property type="molecule type" value="Genomic_DNA"/>
</dbReference>
<dbReference type="RefSeq" id="YP_001468295.1">
    <property type="nucleotide sequence ID" value="NC_009808.1"/>
</dbReference>
<dbReference type="SMR" id="A7Y3A9"/>
<dbReference type="GeneID" id="5601336"/>
<dbReference type="GO" id="GO:0009535">
    <property type="term" value="C:chloroplast thylakoid membrane"/>
    <property type="evidence" value="ECO:0007669"/>
    <property type="project" value="UniProtKB-SubCell"/>
</dbReference>
<dbReference type="GO" id="GO:0045259">
    <property type="term" value="C:proton-transporting ATP synthase complex"/>
    <property type="evidence" value="ECO:0007669"/>
    <property type="project" value="UniProtKB-KW"/>
</dbReference>
<dbReference type="GO" id="GO:0033177">
    <property type="term" value="C:proton-transporting two-sector ATPase complex, proton-transporting domain"/>
    <property type="evidence" value="ECO:0007669"/>
    <property type="project" value="InterPro"/>
</dbReference>
<dbReference type="GO" id="GO:0008289">
    <property type="term" value="F:lipid binding"/>
    <property type="evidence" value="ECO:0007669"/>
    <property type="project" value="UniProtKB-KW"/>
</dbReference>
<dbReference type="GO" id="GO:0046933">
    <property type="term" value="F:proton-transporting ATP synthase activity, rotational mechanism"/>
    <property type="evidence" value="ECO:0007669"/>
    <property type="project" value="UniProtKB-UniRule"/>
</dbReference>
<dbReference type="CDD" id="cd18183">
    <property type="entry name" value="ATP-synt_Fo_c_ATPH"/>
    <property type="match status" value="1"/>
</dbReference>
<dbReference type="FunFam" id="1.20.20.10:FF:000001">
    <property type="entry name" value="ATP synthase subunit c, chloroplastic"/>
    <property type="match status" value="1"/>
</dbReference>
<dbReference type="Gene3D" id="1.20.20.10">
    <property type="entry name" value="F1F0 ATP synthase subunit C"/>
    <property type="match status" value="1"/>
</dbReference>
<dbReference type="HAMAP" id="MF_01396">
    <property type="entry name" value="ATP_synth_c_bact"/>
    <property type="match status" value="1"/>
</dbReference>
<dbReference type="InterPro" id="IPR005953">
    <property type="entry name" value="ATP_synth_csu_bac/chlpt"/>
</dbReference>
<dbReference type="InterPro" id="IPR000454">
    <property type="entry name" value="ATP_synth_F0_csu"/>
</dbReference>
<dbReference type="InterPro" id="IPR020537">
    <property type="entry name" value="ATP_synth_F0_csu_DDCD_BS"/>
</dbReference>
<dbReference type="InterPro" id="IPR038662">
    <property type="entry name" value="ATP_synth_F0_csu_sf"/>
</dbReference>
<dbReference type="InterPro" id="IPR002379">
    <property type="entry name" value="ATPase_proteolipid_c-like_dom"/>
</dbReference>
<dbReference type="InterPro" id="IPR035921">
    <property type="entry name" value="F/V-ATP_Csub_sf"/>
</dbReference>
<dbReference type="NCBIfam" id="TIGR01260">
    <property type="entry name" value="ATP_synt_c"/>
    <property type="match status" value="1"/>
</dbReference>
<dbReference type="NCBIfam" id="NF005608">
    <property type="entry name" value="PRK07354.1"/>
    <property type="match status" value="1"/>
</dbReference>
<dbReference type="PANTHER" id="PTHR10031">
    <property type="entry name" value="ATP SYNTHASE LIPID-BINDING PROTEIN, MITOCHONDRIAL"/>
    <property type="match status" value="1"/>
</dbReference>
<dbReference type="PANTHER" id="PTHR10031:SF0">
    <property type="entry name" value="ATPASE PROTEIN 9"/>
    <property type="match status" value="1"/>
</dbReference>
<dbReference type="Pfam" id="PF00137">
    <property type="entry name" value="ATP-synt_C"/>
    <property type="match status" value="1"/>
</dbReference>
<dbReference type="PRINTS" id="PR00124">
    <property type="entry name" value="ATPASEC"/>
</dbReference>
<dbReference type="SUPFAM" id="SSF81333">
    <property type="entry name" value="F1F0 ATP synthase subunit C"/>
    <property type="match status" value="1"/>
</dbReference>
<dbReference type="PROSITE" id="PS00605">
    <property type="entry name" value="ATPASE_C"/>
    <property type="match status" value="1"/>
</dbReference>